<sequence>MISVNDFYPGLTIELDGEIYIVLEYQHVHMAQGQATVRVKLKNLKTGNVIRKTFKSDEYVPQAFINKREAEYLYKQGDEYYFIDNESFEQYVLTEEQLGEAINYLKEGNTVSVLFYEGNPIGIELPTTVVLEVVETDPGLRGDTVSGGSKPAKLETGLVIQVPLFIQIGDKVVVDTRYAKYVERA</sequence>
<dbReference type="EMBL" id="CP001146">
    <property type="protein sequence ID" value="ACI19294.1"/>
    <property type="molecule type" value="Genomic_DNA"/>
</dbReference>
<dbReference type="RefSeq" id="WP_012547926.1">
    <property type="nucleotide sequence ID" value="NC_011297.1"/>
</dbReference>
<dbReference type="SMR" id="B5YDZ9"/>
<dbReference type="STRING" id="309799.DICTH_0895"/>
<dbReference type="PaxDb" id="309799-DICTH_0895"/>
<dbReference type="KEGG" id="dth:DICTH_0895"/>
<dbReference type="eggNOG" id="COG0231">
    <property type="taxonomic scope" value="Bacteria"/>
</dbReference>
<dbReference type="HOGENOM" id="CLU_074944_0_1_0"/>
<dbReference type="OrthoDB" id="9801844at2"/>
<dbReference type="UniPathway" id="UPA00345"/>
<dbReference type="Proteomes" id="UP000001733">
    <property type="component" value="Chromosome"/>
</dbReference>
<dbReference type="GO" id="GO:0005737">
    <property type="term" value="C:cytoplasm"/>
    <property type="evidence" value="ECO:0007669"/>
    <property type="project" value="UniProtKB-SubCell"/>
</dbReference>
<dbReference type="GO" id="GO:0003746">
    <property type="term" value="F:translation elongation factor activity"/>
    <property type="evidence" value="ECO:0007669"/>
    <property type="project" value="UniProtKB-UniRule"/>
</dbReference>
<dbReference type="GO" id="GO:0043043">
    <property type="term" value="P:peptide biosynthetic process"/>
    <property type="evidence" value="ECO:0007669"/>
    <property type="project" value="InterPro"/>
</dbReference>
<dbReference type="CDD" id="cd04470">
    <property type="entry name" value="S1_EF-P_repeat_1"/>
    <property type="match status" value="1"/>
</dbReference>
<dbReference type="CDD" id="cd05794">
    <property type="entry name" value="S1_EF-P_repeat_2"/>
    <property type="match status" value="1"/>
</dbReference>
<dbReference type="FunFam" id="2.30.30.30:FF:000003">
    <property type="entry name" value="Elongation factor P"/>
    <property type="match status" value="1"/>
</dbReference>
<dbReference type="FunFam" id="2.40.50.140:FF:000004">
    <property type="entry name" value="Elongation factor P"/>
    <property type="match status" value="1"/>
</dbReference>
<dbReference type="FunFam" id="2.40.50.140:FF:000009">
    <property type="entry name" value="Elongation factor P"/>
    <property type="match status" value="1"/>
</dbReference>
<dbReference type="Gene3D" id="2.30.30.30">
    <property type="match status" value="1"/>
</dbReference>
<dbReference type="Gene3D" id="2.40.50.140">
    <property type="entry name" value="Nucleic acid-binding proteins"/>
    <property type="match status" value="2"/>
</dbReference>
<dbReference type="HAMAP" id="MF_00141">
    <property type="entry name" value="EF_P"/>
    <property type="match status" value="1"/>
</dbReference>
<dbReference type="InterPro" id="IPR015365">
    <property type="entry name" value="Elong-fact-P_C"/>
</dbReference>
<dbReference type="InterPro" id="IPR012340">
    <property type="entry name" value="NA-bd_OB-fold"/>
</dbReference>
<dbReference type="InterPro" id="IPR014722">
    <property type="entry name" value="Rib_uL2_dom2"/>
</dbReference>
<dbReference type="InterPro" id="IPR020599">
    <property type="entry name" value="Transl_elong_fac_P/YeiP"/>
</dbReference>
<dbReference type="InterPro" id="IPR013185">
    <property type="entry name" value="Transl_elong_KOW-like"/>
</dbReference>
<dbReference type="InterPro" id="IPR001059">
    <property type="entry name" value="Transl_elong_P/YeiP_cen"/>
</dbReference>
<dbReference type="InterPro" id="IPR013852">
    <property type="entry name" value="Transl_elong_P/YeiP_CS"/>
</dbReference>
<dbReference type="InterPro" id="IPR011768">
    <property type="entry name" value="Transl_elongation_fac_P"/>
</dbReference>
<dbReference type="InterPro" id="IPR008991">
    <property type="entry name" value="Translation_prot_SH3-like_sf"/>
</dbReference>
<dbReference type="NCBIfam" id="TIGR00038">
    <property type="entry name" value="efp"/>
    <property type="match status" value="1"/>
</dbReference>
<dbReference type="NCBIfam" id="NF001810">
    <property type="entry name" value="PRK00529.1"/>
    <property type="match status" value="1"/>
</dbReference>
<dbReference type="PANTHER" id="PTHR30053">
    <property type="entry name" value="ELONGATION FACTOR P"/>
    <property type="match status" value="1"/>
</dbReference>
<dbReference type="PANTHER" id="PTHR30053:SF12">
    <property type="entry name" value="ELONGATION FACTOR P (EF-P) FAMILY PROTEIN"/>
    <property type="match status" value="1"/>
</dbReference>
<dbReference type="Pfam" id="PF01132">
    <property type="entry name" value="EFP"/>
    <property type="match status" value="1"/>
</dbReference>
<dbReference type="Pfam" id="PF08207">
    <property type="entry name" value="EFP_N"/>
    <property type="match status" value="1"/>
</dbReference>
<dbReference type="Pfam" id="PF09285">
    <property type="entry name" value="Elong-fact-P_C"/>
    <property type="match status" value="1"/>
</dbReference>
<dbReference type="PIRSF" id="PIRSF005901">
    <property type="entry name" value="EF-P"/>
    <property type="match status" value="1"/>
</dbReference>
<dbReference type="SMART" id="SM01185">
    <property type="entry name" value="EFP"/>
    <property type="match status" value="1"/>
</dbReference>
<dbReference type="SMART" id="SM00841">
    <property type="entry name" value="Elong-fact-P_C"/>
    <property type="match status" value="1"/>
</dbReference>
<dbReference type="SUPFAM" id="SSF50249">
    <property type="entry name" value="Nucleic acid-binding proteins"/>
    <property type="match status" value="2"/>
</dbReference>
<dbReference type="SUPFAM" id="SSF50104">
    <property type="entry name" value="Translation proteins SH3-like domain"/>
    <property type="match status" value="1"/>
</dbReference>
<dbReference type="PROSITE" id="PS01275">
    <property type="entry name" value="EFP"/>
    <property type="match status" value="1"/>
</dbReference>
<feature type="chain" id="PRO_1000096149" description="Elongation factor P">
    <location>
        <begin position="1"/>
        <end position="185"/>
    </location>
</feature>
<comment type="function">
    <text evidence="1">Involved in peptide bond synthesis. Stimulates efficient translation and peptide-bond synthesis on native or reconstituted 70S ribosomes in vitro. Probably functions indirectly by altering the affinity of the ribosome for aminoacyl-tRNA, thus increasing their reactivity as acceptors for peptidyl transferase.</text>
</comment>
<comment type="pathway">
    <text evidence="1">Protein biosynthesis; polypeptide chain elongation.</text>
</comment>
<comment type="subcellular location">
    <subcellularLocation>
        <location evidence="1">Cytoplasm</location>
    </subcellularLocation>
</comment>
<comment type="similarity">
    <text evidence="1">Belongs to the elongation factor P family.</text>
</comment>
<reference key="1">
    <citation type="journal article" date="2014" name="Genome Announc.">
        <title>Complete Genome Sequence of the Extreme Thermophile Dictyoglomus thermophilum H-6-12.</title>
        <authorList>
            <person name="Coil D.A."/>
            <person name="Badger J.H."/>
            <person name="Forberger H.C."/>
            <person name="Riggs F."/>
            <person name="Madupu R."/>
            <person name="Fedorova N."/>
            <person name="Ward N."/>
            <person name="Robb F.T."/>
            <person name="Eisen J.A."/>
        </authorList>
    </citation>
    <scope>NUCLEOTIDE SEQUENCE [LARGE SCALE GENOMIC DNA]</scope>
    <source>
        <strain>ATCC 35947 / DSM 3960 / H-6-12</strain>
    </source>
</reference>
<proteinExistence type="inferred from homology"/>
<protein>
    <recommendedName>
        <fullName evidence="1">Elongation factor P</fullName>
        <shortName evidence="1">EF-P</shortName>
    </recommendedName>
</protein>
<organism>
    <name type="scientific">Dictyoglomus thermophilum (strain ATCC 35947 / DSM 3960 / H-6-12)</name>
    <dbReference type="NCBI Taxonomy" id="309799"/>
    <lineage>
        <taxon>Bacteria</taxon>
        <taxon>Pseudomonadati</taxon>
        <taxon>Dictyoglomota</taxon>
        <taxon>Dictyoglomia</taxon>
        <taxon>Dictyoglomales</taxon>
        <taxon>Dictyoglomaceae</taxon>
        <taxon>Dictyoglomus</taxon>
    </lineage>
</organism>
<name>EFP_DICT6</name>
<evidence type="ECO:0000255" key="1">
    <source>
        <dbReference type="HAMAP-Rule" id="MF_00141"/>
    </source>
</evidence>
<accession>B5YDZ9</accession>
<keyword id="KW-0963">Cytoplasm</keyword>
<keyword id="KW-0251">Elongation factor</keyword>
<keyword id="KW-0648">Protein biosynthesis</keyword>
<gene>
    <name evidence="1" type="primary">efp</name>
    <name type="ordered locus">DICTH_0895</name>
</gene>